<dbReference type="EC" id="3.1.3.5" evidence="1"/>
<dbReference type="EMBL" id="AM920689">
    <property type="protein sequence ID" value="CAP51913.1"/>
    <property type="molecule type" value="Genomic_DNA"/>
</dbReference>
<dbReference type="SMR" id="B0RTZ9"/>
<dbReference type="KEGG" id="xca:xcc-b100_2553"/>
<dbReference type="HOGENOM" id="CLU_045192_1_2_6"/>
<dbReference type="Proteomes" id="UP000001188">
    <property type="component" value="Chromosome"/>
</dbReference>
<dbReference type="GO" id="GO:0005737">
    <property type="term" value="C:cytoplasm"/>
    <property type="evidence" value="ECO:0007669"/>
    <property type="project" value="UniProtKB-SubCell"/>
</dbReference>
<dbReference type="GO" id="GO:0008254">
    <property type="term" value="F:3'-nucleotidase activity"/>
    <property type="evidence" value="ECO:0007669"/>
    <property type="project" value="TreeGrafter"/>
</dbReference>
<dbReference type="GO" id="GO:0008253">
    <property type="term" value="F:5'-nucleotidase activity"/>
    <property type="evidence" value="ECO:0007669"/>
    <property type="project" value="UniProtKB-UniRule"/>
</dbReference>
<dbReference type="GO" id="GO:0004309">
    <property type="term" value="F:exopolyphosphatase activity"/>
    <property type="evidence" value="ECO:0007669"/>
    <property type="project" value="TreeGrafter"/>
</dbReference>
<dbReference type="GO" id="GO:0046872">
    <property type="term" value="F:metal ion binding"/>
    <property type="evidence" value="ECO:0007669"/>
    <property type="project" value="UniProtKB-UniRule"/>
</dbReference>
<dbReference type="GO" id="GO:0000166">
    <property type="term" value="F:nucleotide binding"/>
    <property type="evidence" value="ECO:0007669"/>
    <property type="project" value="UniProtKB-KW"/>
</dbReference>
<dbReference type="FunFam" id="3.40.1210.10:FF:000001">
    <property type="entry name" value="5'/3'-nucleotidase SurE"/>
    <property type="match status" value="1"/>
</dbReference>
<dbReference type="Gene3D" id="3.40.1210.10">
    <property type="entry name" value="Survival protein SurE-like phosphatase/nucleotidase"/>
    <property type="match status" value="1"/>
</dbReference>
<dbReference type="HAMAP" id="MF_00060">
    <property type="entry name" value="SurE"/>
    <property type="match status" value="1"/>
</dbReference>
<dbReference type="InterPro" id="IPR030048">
    <property type="entry name" value="SurE"/>
</dbReference>
<dbReference type="InterPro" id="IPR002828">
    <property type="entry name" value="SurE-like_Pase/nucleotidase"/>
</dbReference>
<dbReference type="InterPro" id="IPR036523">
    <property type="entry name" value="SurE-like_sf"/>
</dbReference>
<dbReference type="NCBIfam" id="NF001489">
    <property type="entry name" value="PRK00346.1-3"/>
    <property type="match status" value="1"/>
</dbReference>
<dbReference type="NCBIfam" id="NF001490">
    <property type="entry name" value="PRK00346.1-4"/>
    <property type="match status" value="1"/>
</dbReference>
<dbReference type="NCBIfam" id="TIGR00087">
    <property type="entry name" value="surE"/>
    <property type="match status" value="1"/>
</dbReference>
<dbReference type="PANTHER" id="PTHR30457">
    <property type="entry name" value="5'-NUCLEOTIDASE SURE"/>
    <property type="match status" value="1"/>
</dbReference>
<dbReference type="PANTHER" id="PTHR30457:SF12">
    <property type="entry name" value="5'_3'-NUCLEOTIDASE SURE"/>
    <property type="match status" value="1"/>
</dbReference>
<dbReference type="Pfam" id="PF01975">
    <property type="entry name" value="SurE"/>
    <property type="match status" value="1"/>
</dbReference>
<dbReference type="SUPFAM" id="SSF64167">
    <property type="entry name" value="SurE-like"/>
    <property type="match status" value="1"/>
</dbReference>
<keyword id="KW-0963">Cytoplasm</keyword>
<keyword id="KW-0378">Hydrolase</keyword>
<keyword id="KW-0479">Metal-binding</keyword>
<keyword id="KW-0547">Nucleotide-binding</keyword>
<accession>B0RTZ9</accession>
<gene>
    <name evidence="1" type="primary">surE</name>
    <name type="ordered locus">xcc-b100_2553</name>
</gene>
<sequence length="259" mass="27329">MRVLVSNDDGVDAPGIQILAEALRRAGHEVMVVAPDRDRSGASNSLTLDVPIRTRRIDAQTCAVAGTPTDCVHLALTGMLDYDPDIVVSGINNSANLGDDVIYSGTVSAAMEGRFLGLPAVAVSLVTQNHEAHHFETAARAAVEIVARLKADPLPADTILNVNVPDLAWADVLGFEVTRLGNRHRSEPCVPQSDPRGRTVYWIGPAGPEQDAGAGTDFHAVRTGHISITPIHVDLTRYQALDTVAGWVGGLTAALDAPA</sequence>
<evidence type="ECO:0000255" key="1">
    <source>
        <dbReference type="HAMAP-Rule" id="MF_00060"/>
    </source>
</evidence>
<protein>
    <recommendedName>
        <fullName evidence="1">5'-nucleotidase SurE</fullName>
        <ecNumber evidence="1">3.1.3.5</ecNumber>
    </recommendedName>
    <alternativeName>
        <fullName evidence="1">Nucleoside 5'-monophosphate phosphohydrolase</fullName>
    </alternativeName>
</protein>
<organism>
    <name type="scientific">Xanthomonas campestris pv. campestris (strain B100)</name>
    <dbReference type="NCBI Taxonomy" id="509169"/>
    <lineage>
        <taxon>Bacteria</taxon>
        <taxon>Pseudomonadati</taxon>
        <taxon>Pseudomonadota</taxon>
        <taxon>Gammaproteobacteria</taxon>
        <taxon>Lysobacterales</taxon>
        <taxon>Lysobacteraceae</taxon>
        <taxon>Xanthomonas</taxon>
    </lineage>
</organism>
<proteinExistence type="inferred from homology"/>
<feature type="chain" id="PRO_1000092047" description="5'-nucleotidase SurE">
    <location>
        <begin position="1"/>
        <end position="259"/>
    </location>
</feature>
<feature type="binding site" evidence="1">
    <location>
        <position position="8"/>
    </location>
    <ligand>
        <name>a divalent metal cation</name>
        <dbReference type="ChEBI" id="CHEBI:60240"/>
    </ligand>
</feature>
<feature type="binding site" evidence="1">
    <location>
        <position position="9"/>
    </location>
    <ligand>
        <name>a divalent metal cation</name>
        <dbReference type="ChEBI" id="CHEBI:60240"/>
    </ligand>
</feature>
<feature type="binding site" evidence="1">
    <location>
        <position position="40"/>
    </location>
    <ligand>
        <name>a divalent metal cation</name>
        <dbReference type="ChEBI" id="CHEBI:60240"/>
    </ligand>
</feature>
<feature type="binding site" evidence="1">
    <location>
        <position position="92"/>
    </location>
    <ligand>
        <name>a divalent metal cation</name>
        <dbReference type="ChEBI" id="CHEBI:60240"/>
    </ligand>
</feature>
<comment type="function">
    <text evidence="1">Nucleotidase that shows phosphatase activity on nucleoside 5'-monophosphates.</text>
</comment>
<comment type="catalytic activity">
    <reaction evidence="1">
        <text>a ribonucleoside 5'-phosphate + H2O = a ribonucleoside + phosphate</text>
        <dbReference type="Rhea" id="RHEA:12484"/>
        <dbReference type="ChEBI" id="CHEBI:15377"/>
        <dbReference type="ChEBI" id="CHEBI:18254"/>
        <dbReference type="ChEBI" id="CHEBI:43474"/>
        <dbReference type="ChEBI" id="CHEBI:58043"/>
        <dbReference type="EC" id="3.1.3.5"/>
    </reaction>
</comment>
<comment type="cofactor">
    <cofactor evidence="1">
        <name>a divalent metal cation</name>
        <dbReference type="ChEBI" id="CHEBI:60240"/>
    </cofactor>
    <text evidence="1">Binds 1 divalent metal cation per subunit.</text>
</comment>
<comment type="subcellular location">
    <subcellularLocation>
        <location evidence="1">Cytoplasm</location>
    </subcellularLocation>
</comment>
<comment type="similarity">
    <text evidence="1">Belongs to the SurE nucleotidase family.</text>
</comment>
<reference key="1">
    <citation type="journal article" date="2008" name="J. Biotechnol.">
        <title>The genome of Xanthomonas campestris pv. campestris B100 and its use for the reconstruction of metabolic pathways involved in xanthan biosynthesis.</title>
        <authorList>
            <person name="Vorhoelter F.-J."/>
            <person name="Schneiker S."/>
            <person name="Goesmann A."/>
            <person name="Krause L."/>
            <person name="Bekel T."/>
            <person name="Kaiser O."/>
            <person name="Linke B."/>
            <person name="Patschkowski T."/>
            <person name="Rueckert C."/>
            <person name="Schmid J."/>
            <person name="Sidhu V.K."/>
            <person name="Sieber V."/>
            <person name="Tauch A."/>
            <person name="Watt S.A."/>
            <person name="Weisshaar B."/>
            <person name="Becker A."/>
            <person name="Niehaus K."/>
            <person name="Puehler A."/>
        </authorList>
    </citation>
    <scope>NUCLEOTIDE SEQUENCE [LARGE SCALE GENOMIC DNA]</scope>
    <source>
        <strain>B100</strain>
    </source>
</reference>
<name>SURE_XANCB</name>